<evidence type="ECO:0000305" key="1"/>
<evidence type="ECO:0000305" key="2">
    <source>
    </source>
</evidence>
<feature type="chain" id="PRO_0000299794" description="Putative uncharacterized protein YBR131C-A">
    <location>
        <begin position="1"/>
        <end position="29"/>
    </location>
</feature>
<comment type="miscellaneous">
    <text evidence="1">Completely overlaps CCZ1.</text>
</comment>
<comment type="caution">
    <text evidence="2">Product of a dubious gene prediction unlikely to encode a functional protein. Because of that it is not part of the S.cerevisiae S288c complete/reference proteome set.</text>
</comment>
<accession>Q8TGQ5</accession>
<organism>
    <name type="scientific">Saccharomyces cerevisiae (strain ATCC 204508 / S288c)</name>
    <name type="common">Baker's yeast</name>
    <dbReference type="NCBI Taxonomy" id="559292"/>
    <lineage>
        <taxon>Eukaryota</taxon>
        <taxon>Fungi</taxon>
        <taxon>Dikarya</taxon>
        <taxon>Ascomycota</taxon>
        <taxon>Saccharomycotina</taxon>
        <taxon>Saccharomycetes</taxon>
        <taxon>Saccharomycetales</taxon>
        <taxon>Saccharomycetaceae</taxon>
        <taxon>Saccharomyces</taxon>
    </lineage>
</organism>
<sequence>MTLRHYFFLQDYKRNVENLPFYKNQATLQ</sequence>
<reference key="1">
    <citation type="journal article" date="1994" name="EMBO J.">
        <title>Complete DNA sequence of yeast chromosome II.</title>
        <authorList>
            <person name="Feldmann H."/>
            <person name="Aigle M."/>
            <person name="Aljinovic G."/>
            <person name="Andre B."/>
            <person name="Baclet M.C."/>
            <person name="Barthe C."/>
            <person name="Baur A."/>
            <person name="Becam A.-M."/>
            <person name="Biteau N."/>
            <person name="Boles E."/>
            <person name="Brandt T."/>
            <person name="Brendel M."/>
            <person name="Brueckner M."/>
            <person name="Bussereau F."/>
            <person name="Christiansen C."/>
            <person name="Contreras R."/>
            <person name="Crouzet M."/>
            <person name="Cziepluch C."/>
            <person name="Demolis N."/>
            <person name="Delaveau T."/>
            <person name="Doignon F."/>
            <person name="Domdey H."/>
            <person name="Duesterhus S."/>
            <person name="Dubois E."/>
            <person name="Dujon B."/>
            <person name="El Bakkoury M."/>
            <person name="Entian K.-D."/>
            <person name="Feuermann M."/>
            <person name="Fiers W."/>
            <person name="Fobo G.M."/>
            <person name="Fritz C."/>
            <person name="Gassenhuber J."/>
            <person name="Glansdorff N."/>
            <person name="Goffeau A."/>
            <person name="Grivell L.A."/>
            <person name="de Haan M."/>
            <person name="Hein C."/>
            <person name="Herbert C.J."/>
            <person name="Hollenberg C.P."/>
            <person name="Holmstroem K."/>
            <person name="Jacq C."/>
            <person name="Jacquet M."/>
            <person name="Jauniaux J.-C."/>
            <person name="Jonniaux J.-L."/>
            <person name="Kallesoee T."/>
            <person name="Kiesau P."/>
            <person name="Kirchrath L."/>
            <person name="Koetter P."/>
            <person name="Korol S."/>
            <person name="Liebl S."/>
            <person name="Logghe M."/>
            <person name="Lohan A.J.E."/>
            <person name="Louis E.J."/>
            <person name="Li Z.Y."/>
            <person name="Maat M.J."/>
            <person name="Mallet L."/>
            <person name="Mannhaupt G."/>
            <person name="Messenguy F."/>
            <person name="Miosga T."/>
            <person name="Molemans F."/>
            <person name="Mueller S."/>
            <person name="Nasr F."/>
            <person name="Obermaier B."/>
            <person name="Perea J."/>
            <person name="Pierard A."/>
            <person name="Piravandi E."/>
            <person name="Pohl F.M."/>
            <person name="Pohl T.M."/>
            <person name="Potier S."/>
            <person name="Proft M."/>
            <person name="Purnelle B."/>
            <person name="Ramezani Rad M."/>
            <person name="Rieger M."/>
            <person name="Rose M."/>
            <person name="Schaaff-Gerstenschlaeger I."/>
            <person name="Scherens B."/>
            <person name="Schwarzlose C."/>
            <person name="Skala J."/>
            <person name="Slonimski P.P."/>
            <person name="Smits P.H.M."/>
            <person name="Souciet J.-L."/>
            <person name="Steensma H.Y."/>
            <person name="Stucka R."/>
            <person name="Urrestarazu L.A."/>
            <person name="van der Aart Q.J.M."/>
            <person name="Van Dyck L."/>
            <person name="Vassarotti A."/>
            <person name="Vetter I."/>
            <person name="Vierendeels F."/>
            <person name="Vissers S."/>
            <person name="Wagner G."/>
            <person name="de Wergifosse P."/>
            <person name="Wolfe K.H."/>
            <person name="Zagulski M."/>
            <person name="Zimmermann F.K."/>
            <person name="Mewes H.-W."/>
            <person name="Kleine K."/>
        </authorList>
    </citation>
    <scope>NUCLEOTIDE SEQUENCE [LARGE SCALE GENOMIC DNA]</scope>
    <source>
        <strain>ATCC 204508 / S288c</strain>
    </source>
</reference>
<reference key="2">
    <citation type="journal article" date="2014" name="G3 (Bethesda)">
        <title>The reference genome sequence of Saccharomyces cerevisiae: Then and now.</title>
        <authorList>
            <person name="Engel S.R."/>
            <person name="Dietrich F.S."/>
            <person name="Fisk D.G."/>
            <person name="Binkley G."/>
            <person name="Balakrishnan R."/>
            <person name="Costanzo M.C."/>
            <person name="Dwight S.S."/>
            <person name="Hitz B.C."/>
            <person name="Karra K."/>
            <person name="Nash R.S."/>
            <person name="Weng S."/>
            <person name="Wong E.D."/>
            <person name="Lloyd P."/>
            <person name="Skrzypek M.S."/>
            <person name="Miyasato S.R."/>
            <person name="Simison M."/>
            <person name="Cherry J.M."/>
        </authorList>
    </citation>
    <scope>GENOME REANNOTATION</scope>
    <source>
        <strain>ATCC 204508 / S288c</strain>
    </source>
</reference>
<reference key="3">
    <citation type="journal article" date="2002" name="Nat. Biotechnol.">
        <title>An integrated approach for finding overlooked genes in yeast.</title>
        <authorList>
            <person name="Kumar A."/>
            <person name="Harrison P.M."/>
            <person name="Cheung K.-H."/>
            <person name="Lan N."/>
            <person name="Echols N."/>
            <person name="Bertone P."/>
            <person name="Miller P."/>
            <person name="Gerstein M.B."/>
            <person name="Snyder M."/>
        </authorList>
    </citation>
    <scope>NUCLEOTIDE SEQUENCE [GENOMIC DNA]</scope>
</reference>
<protein>
    <recommendedName>
        <fullName>Putative uncharacterized protein YBR131C-A</fullName>
    </recommendedName>
</protein>
<name>YB131_YEAST</name>
<gene>
    <name type="ordered locus">YBR131C-A</name>
</gene>
<dbReference type="EMBL" id="Z36000">
    <property type="status" value="NOT_ANNOTATED_CDS"/>
    <property type="molecule type" value="Genomic_DNA"/>
</dbReference>
<dbReference type="EMBL" id="AF479933">
    <property type="protein sequence ID" value="AAL79246.1"/>
    <property type="molecule type" value="Genomic_DNA"/>
</dbReference>
<dbReference type="STRING" id="4932.YBR131C-A"/>
<dbReference type="PaxDb" id="4932-YBR131C-A"/>
<dbReference type="EnsemblFungi" id="YBR131C-A_mRNA">
    <property type="protein sequence ID" value="YBR131C-A"/>
    <property type="gene ID" value="YBR131C-A"/>
</dbReference>
<dbReference type="AGR" id="SGD:S000028601"/>
<dbReference type="SGD" id="S000028601">
    <property type="gene designation" value="YBR131C-A"/>
</dbReference>
<dbReference type="HOGENOM" id="CLU_3410824_0_0_1"/>
<proteinExistence type="uncertain"/>